<name>RS15_NEIMB</name>
<reference key="1">
    <citation type="journal article" date="2000" name="Science">
        <title>Complete genome sequence of Neisseria meningitidis serogroup B strain MC58.</title>
        <authorList>
            <person name="Tettelin H."/>
            <person name="Saunders N.J."/>
            <person name="Heidelberg J.F."/>
            <person name="Jeffries A.C."/>
            <person name="Nelson K.E."/>
            <person name="Eisen J.A."/>
            <person name="Ketchum K.A."/>
            <person name="Hood D.W."/>
            <person name="Peden J.F."/>
            <person name="Dodson R.J."/>
            <person name="Nelson W.C."/>
            <person name="Gwinn M.L."/>
            <person name="DeBoy R.T."/>
            <person name="Peterson J.D."/>
            <person name="Hickey E.K."/>
            <person name="Haft D.H."/>
            <person name="Salzberg S.L."/>
            <person name="White O."/>
            <person name="Fleischmann R.D."/>
            <person name="Dougherty B.A."/>
            <person name="Mason T.M."/>
            <person name="Ciecko A."/>
            <person name="Parksey D.S."/>
            <person name="Blair E."/>
            <person name="Cittone H."/>
            <person name="Clark E.B."/>
            <person name="Cotton M.D."/>
            <person name="Utterback T.R."/>
            <person name="Khouri H.M."/>
            <person name="Qin H."/>
            <person name="Vamathevan J.J."/>
            <person name="Gill J."/>
            <person name="Scarlato V."/>
            <person name="Masignani V."/>
            <person name="Pizza M."/>
            <person name="Grandi G."/>
            <person name="Sun L."/>
            <person name="Smith H.O."/>
            <person name="Fraser C.M."/>
            <person name="Moxon E.R."/>
            <person name="Rappuoli R."/>
            <person name="Venter J.C."/>
        </authorList>
    </citation>
    <scope>NUCLEOTIDE SEQUENCE [LARGE SCALE GENOMIC DNA]</scope>
    <source>
        <strain>ATCC BAA-335 / MC58</strain>
    </source>
</reference>
<keyword id="KW-1185">Reference proteome</keyword>
<keyword id="KW-0687">Ribonucleoprotein</keyword>
<keyword id="KW-0689">Ribosomal protein</keyword>
<keyword id="KW-0694">RNA-binding</keyword>
<keyword id="KW-0699">rRNA-binding</keyword>
<evidence type="ECO:0000255" key="1">
    <source>
        <dbReference type="HAMAP-Rule" id="MF_01343"/>
    </source>
</evidence>
<evidence type="ECO:0000305" key="2"/>
<protein>
    <recommendedName>
        <fullName evidence="1">Small ribosomal subunit protein uS15</fullName>
    </recommendedName>
    <alternativeName>
        <fullName evidence="2">30S ribosomal protein S15</fullName>
    </alternativeName>
</protein>
<feature type="chain" id="PRO_0000115489" description="Small ribosomal subunit protein uS15">
    <location>
        <begin position="1"/>
        <end position="89"/>
    </location>
</feature>
<organism>
    <name type="scientific">Neisseria meningitidis serogroup B (strain ATCC BAA-335 / MC58)</name>
    <dbReference type="NCBI Taxonomy" id="122586"/>
    <lineage>
        <taxon>Bacteria</taxon>
        <taxon>Pseudomonadati</taxon>
        <taxon>Pseudomonadota</taxon>
        <taxon>Betaproteobacteria</taxon>
        <taxon>Neisseriales</taxon>
        <taxon>Neisseriaceae</taxon>
        <taxon>Neisseria</taxon>
    </lineage>
</organism>
<gene>
    <name evidence="1" type="primary">rpsO</name>
    <name type="ordered locus">NMB0609</name>
</gene>
<dbReference type="EMBL" id="AE002098">
    <property type="protein sequence ID" value="AAF41036.1"/>
    <property type="molecule type" value="Genomic_DNA"/>
</dbReference>
<dbReference type="RefSeq" id="NP_273653.1">
    <property type="nucleotide sequence ID" value="NC_003112.2"/>
</dbReference>
<dbReference type="RefSeq" id="WP_002217790.1">
    <property type="nucleotide sequence ID" value="NC_003112.2"/>
</dbReference>
<dbReference type="SMR" id="Q7DDM4"/>
<dbReference type="FunCoup" id="Q7DDM4">
    <property type="interactions" value="481"/>
</dbReference>
<dbReference type="STRING" id="122586.NMB0609"/>
<dbReference type="PaxDb" id="122586-NMB0609"/>
<dbReference type="GeneID" id="93386561"/>
<dbReference type="KEGG" id="nme:NMB0609"/>
<dbReference type="PATRIC" id="fig|122586.8.peg.772"/>
<dbReference type="HOGENOM" id="CLU_148518_0_0_4"/>
<dbReference type="InParanoid" id="Q7DDM4"/>
<dbReference type="OrthoDB" id="9799262at2"/>
<dbReference type="Proteomes" id="UP000000425">
    <property type="component" value="Chromosome"/>
</dbReference>
<dbReference type="GO" id="GO:0022627">
    <property type="term" value="C:cytosolic small ribosomal subunit"/>
    <property type="evidence" value="ECO:0000318"/>
    <property type="project" value="GO_Central"/>
</dbReference>
<dbReference type="GO" id="GO:0019843">
    <property type="term" value="F:rRNA binding"/>
    <property type="evidence" value="ECO:0007669"/>
    <property type="project" value="UniProtKB-UniRule"/>
</dbReference>
<dbReference type="GO" id="GO:0003735">
    <property type="term" value="F:structural constituent of ribosome"/>
    <property type="evidence" value="ECO:0007669"/>
    <property type="project" value="InterPro"/>
</dbReference>
<dbReference type="GO" id="GO:0006412">
    <property type="term" value="P:translation"/>
    <property type="evidence" value="ECO:0007669"/>
    <property type="project" value="UniProtKB-UniRule"/>
</dbReference>
<dbReference type="CDD" id="cd00353">
    <property type="entry name" value="Ribosomal_S15p_S13e"/>
    <property type="match status" value="1"/>
</dbReference>
<dbReference type="FunFam" id="1.10.287.10:FF:000002">
    <property type="entry name" value="30S ribosomal protein S15"/>
    <property type="match status" value="1"/>
</dbReference>
<dbReference type="Gene3D" id="6.10.250.3130">
    <property type="match status" value="1"/>
</dbReference>
<dbReference type="Gene3D" id="1.10.287.10">
    <property type="entry name" value="S15/NS1, RNA-binding"/>
    <property type="match status" value="1"/>
</dbReference>
<dbReference type="HAMAP" id="MF_01343_B">
    <property type="entry name" value="Ribosomal_uS15_B"/>
    <property type="match status" value="1"/>
</dbReference>
<dbReference type="InterPro" id="IPR000589">
    <property type="entry name" value="Ribosomal_uS15"/>
</dbReference>
<dbReference type="InterPro" id="IPR005290">
    <property type="entry name" value="Ribosomal_uS15_bac-type"/>
</dbReference>
<dbReference type="InterPro" id="IPR009068">
    <property type="entry name" value="uS15_NS1_RNA-bd_sf"/>
</dbReference>
<dbReference type="NCBIfam" id="TIGR00952">
    <property type="entry name" value="S15_bact"/>
    <property type="match status" value="1"/>
</dbReference>
<dbReference type="PANTHER" id="PTHR23321">
    <property type="entry name" value="RIBOSOMAL PROTEIN S15, BACTERIAL AND ORGANELLAR"/>
    <property type="match status" value="1"/>
</dbReference>
<dbReference type="PANTHER" id="PTHR23321:SF26">
    <property type="entry name" value="SMALL RIBOSOMAL SUBUNIT PROTEIN US15M"/>
    <property type="match status" value="1"/>
</dbReference>
<dbReference type="Pfam" id="PF00312">
    <property type="entry name" value="Ribosomal_S15"/>
    <property type="match status" value="1"/>
</dbReference>
<dbReference type="SMART" id="SM01387">
    <property type="entry name" value="Ribosomal_S15"/>
    <property type="match status" value="1"/>
</dbReference>
<dbReference type="SUPFAM" id="SSF47060">
    <property type="entry name" value="S15/NS1 RNA-binding domain"/>
    <property type="match status" value="1"/>
</dbReference>
<dbReference type="PROSITE" id="PS00362">
    <property type="entry name" value="RIBOSOMAL_S15"/>
    <property type="match status" value="1"/>
</dbReference>
<accession>Q7DDM4</accession>
<proteinExistence type="inferred from homology"/>
<sequence length="89" mass="10386">MALTVEQKAQIVKDFQRKEGDTGSSEVQVALLTFRINDLTPHFKANPKDHHSRRGLLKMVSQRRRLLAYLRRTQPDTYRALITRLGLRK</sequence>
<comment type="function">
    <text evidence="1">One of the primary rRNA binding proteins, it binds directly to 16S rRNA where it helps nucleate assembly of the platform of the 30S subunit by binding and bridging several RNA helices of the 16S rRNA.</text>
</comment>
<comment type="function">
    <text evidence="1">Forms an intersubunit bridge (bridge B4) with the 23S rRNA of the 50S subunit in the ribosome.</text>
</comment>
<comment type="subunit">
    <text evidence="1">Part of the 30S ribosomal subunit. Forms a bridge to the 50S subunit in the 70S ribosome, contacting the 23S rRNA.</text>
</comment>
<comment type="similarity">
    <text evidence="1">Belongs to the universal ribosomal protein uS15 family.</text>
</comment>